<sequence>MIVIMKAGFLFLASLCLLVQAVPNKVADKTYVTRQKNIYELFWHVDQPTVYHPELYQKARTFNLVENLDNYNDKEAVNEFMQLLKHGMLPRGQVFTMMNKEMRHQAVVLFRLLYSAKTFDVFYNTAVWARFNVNEQMYLYALSVAVIHRPDTKLMKLPPMYEVMPHLYFNDEVMQKAYNIAMGDTADMKKTYNNIDYYLLAANYTGWYLTKHNVPEQRLNYFTEDVGLNHFYFMLNHNYPPFMLSNSLNFPQIRGEFYFFLHKQVLNRYYLERLSNDMGEVSYVSLDHPIPTGYYPTMRFRNGLAFPQRETGATVPLHMQKYVQMIHDLHTRISTAIDLGYVVDSYGNHVKLYTKQGLNVLGNIVQGNGDSVNVQLYGQLDLLVRKVLGFGYESNVKYQVVPSALQMWSTSLRDPVFFSIYKTILDYYHKYKENLPKYTTEELNFPGVSIESVTVDKLITYFDHFESMLNNGVSIQSHAKAKNTMIKARQYRLNHKPFTYHIVVNSDKNVKGMVRIFLGPKYDEFGHEVDLVHNYMNFMQMDEFVVNLKSGSNTIERNSHESVFVVPDEVPSDVLYNRLVVSEDGSETFKYSSQPYGFPERLLLPKGKKEGMPYNVLVVVSPFDDSNVVQIDSPVWGRHIYDGRAMGFPLDKPVDPLLLVLSNIHVKEVLVHHREMEELNVAL</sequence>
<protein>
    <recommendedName>
        <fullName evidence="9">Hexamerin 70b</fullName>
    </recommendedName>
</protein>
<gene>
    <name evidence="9 17" type="primary">Hex70b</name>
    <name evidence="15" type="synonym">406117</name>
</gene>
<accession>Q6J4Q1</accession>
<accession>A0A7M6UKD0</accession>
<accession>A0A8B6WYY8</accession>
<accession>A0A8U0WQ75</accession>
<accession>Q9Y1C3</accession>
<keyword id="KW-0963">Cytoplasm</keyword>
<keyword id="KW-0903">Direct protein sequencing</keyword>
<keyword id="KW-0325">Glycoprotein</keyword>
<keyword id="KW-0539">Nucleus</keyword>
<keyword id="KW-1185">Reference proteome</keyword>
<keyword id="KW-0964">Secreted</keyword>
<keyword id="KW-0732">Signal</keyword>
<keyword id="KW-0758">Storage protein</keyword>
<dbReference type="EMBL" id="AY601637">
    <property type="protein sequence ID" value="AAT11850.1"/>
    <property type="molecule type" value="mRNA"/>
</dbReference>
<dbReference type="EMBL" id="EF625896">
    <property type="protein sequence ID" value="ABR45903.1"/>
    <property type="molecule type" value="mRNA"/>
</dbReference>
<dbReference type="EMBL" id="AF134821">
    <property type="protein sequence ID" value="AAD40236.1"/>
    <property type="molecule type" value="mRNA"/>
</dbReference>
<dbReference type="RefSeq" id="NP_001011600.1">
    <property type="nucleotide sequence ID" value="NM_001011600.1"/>
</dbReference>
<dbReference type="SMR" id="Q6J4Q1"/>
<dbReference type="FunCoup" id="Q6J4Q1">
    <property type="interactions" value="1"/>
</dbReference>
<dbReference type="STRING" id="7460.Q6J4Q1"/>
<dbReference type="PaxDb" id="7460-GB51697-PA"/>
<dbReference type="EnsemblMetazoa" id="NM_001011600">
    <property type="protein sequence ID" value="NP_001011600"/>
    <property type="gene ID" value="GeneID_406117"/>
</dbReference>
<dbReference type="GeneID" id="406117"/>
<dbReference type="KEGG" id="ame:406117"/>
<dbReference type="CTD" id="100118565"/>
<dbReference type="eggNOG" id="ENOG502QR98">
    <property type="taxonomic scope" value="Eukaryota"/>
</dbReference>
<dbReference type="HOGENOM" id="CLU_012213_1_0_1"/>
<dbReference type="OMA" id="SRYHMER"/>
<dbReference type="OrthoDB" id="5406463at2759"/>
<dbReference type="Proteomes" id="UP000005203">
    <property type="component" value="Linkage group LG8"/>
</dbReference>
<dbReference type="GO" id="GO:0030139">
    <property type="term" value="C:endocytic vesicle"/>
    <property type="evidence" value="ECO:0000314"/>
    <property type="project" value="UniProtKB"/>
</dbReference>
<dbReference type="GO" id="GO:0005615">
    <property type="term" value="C:extracellular space"/>
    <property type="evidence" value="ECO:0000314"/>
    <property type="project" value="UniProtKB"/>
</dbReference>
<dbReference type="GO" id="GO:0005634">
    <property type="term" value="C:nucleus"/>
    <property type="evidence" value="ECO:0000314"/>
    <property type="project" value="UniProtKB"/>
</dbReference>
<dbReference type="GO" id="GO:0045735">
    <property type="term" value="F:nutrient reservoir activity"/>
    <property type="evidence" value="ECO:0007669"/>
    <property type="project" value="UniProtKB-KW"/>
</dbReference>
<dbReference type="Gene3D" id="1.10.1280.10">
    <property type="entry name" value="Di-copper center containing domain from catechol oxidase"/>
    <property type="match status" value="1"/>
</dbReference>
<dbReference type="Gene3D" id="2.60.40.1520">
    <property type="entry name" value="Hemocyanin, C-terminal domain"/>
    <property type="match status" value="1"/>
</dbReference>
<dbReference type="Gene3D" id="1.20.1370.10">
    <property type="entry name" value="Hemocyanin, N-terminal domain"/>
    <property type="match status" value="1"/>
</dbReference>
<dbReference type="InterPro" id="IPR008922">
    <property type="entry name" value="Di-copper_centre_dom_sf"/>
</dbReference>
<dbReference type="InterPro" id="IPR013788">
    <property type="entry name" value="Hemocyanin/hexamerin"/>
</dbReference>
<dbReference type="InterPro" id="IPR000896">
    <property type="entry name" value="Hemocyanin/hexamerin_mid_dom"/>
</dbReference>
<dbReference type="InterPro" id="IPR005203">
    <property type="entry name" value="Hemocyanin_C"/>
</dbReference>
<dbReference type="InterPro" id="IPR037020">
    <property type="entry name" value="Hemocyanin_C_sf"/>
</dbReference>
<dbReference type="InterPro" id="IPR005204">
    <property type="entry name" value="Hemocyanin_N"/>
</dbReference>
<dbReference type="InterPro" id="IPR036697">
    <property type="entry name" value="Hemocyanin_N_sf"/>
</dbReference>
<dbReference type="InterPro" id="IPR014756">
    <property type="entry name" value="Ig_E-set"/>
</dbReference>
<dbReference type="PANTHER" id="PTHR11511:SF5">
    <property type="entry name" value="FAT-BODY PROTEIN 1-RELATED"/>
    <property type="match status" value="1"/>
</dbReference>
<dbReference type="PANTHER" id="PTHR11511">
    <property type="entry name" value="LARVAL STORAGE PROTEIN/PHENOLOXIDASE"/>
    <property type="match status" value="1"/>
</dbReference>
<dbReference type="Pfam" id="PF03723">
    <property type="entry name" value="Hemocyanin_C"/>
    <property type="match status" value="1"/>
</dbReference>
<dbReference type="Pfam" id="PF00372">
    <property type="entry name" value="Hemocyanin_M"/>
    <property type="match status" value="1"/>
</dbReference>
<dbReference type="Pfam" id="PF03722">
    <property type="entry name" value="Hemocyanin_N"/>
    <property type="match status" value="1"/>
</dbReference>
<dbReference type="PRINTS" id="PR00187">
    <property type="entry name" value="HAEMOCYANIN"/>
</dbReference>
<dbReference type="SUPFAM" id="SSF48056">
    <property type="entry name" value="Di-copper centre-containing domain"/>
    <property type="match status" value="1"/>
</dbReference>
<dbReference type="SUPFAM" id="SSF81296">
    <property type="entry name" value="E set domains"/>
    <property type="match status" value="1"/>
</dbReference>
<dbReference type="SUPFAM" id="SSF48050">
    <property type="entry name" value="Hemocyanin, N-terminal domain"/>
    <property type="match status" value="1"/>
</dbReference>
<dbReference type="PROSITE" id="PS00210">
    <property type="entry name" value="HEMOCYANIN_2"/>
    <property type="match status" value="1"/>
</dbReference>
<proteinExistence type="evidence at protein level"/>
<organism evidence="16">
    <name type="scientific">Apis mellifera</name>
    <name type="common">Honeybee</name>
    <dbReference type="NCBI Taxonomy" id="7460"/>
    <lineage>
        <taxon>Eukaryota</taxon>
        <taxon>Metazoa</taxon>
        <taxon>Ecdysozoa</taxon>
        <taxon>Arthropoda</taxon>
        <taxon>Hexapoda</taxon>
        <taxon>Insecta</taxon>
        <taxon>Pterygota</taxon>
        <taxon>Neoptera</taxon>
        <taxon>Endopterygota</taxon>
        <taxon>Hymenoptera</taxon>
        <taxon>Apocrita</taxon>
        <taxon>Aculeata</taxon>
        <taxon>Apoidea</taxon>
        <taxon>Anthophila</taxon>
        <taxon>Apidae</taxon>
        <taxon>Apis</taxon>
    </lineage>
</organism>
<name>HEX7B_APIME</name>
<feature type="signal peptide" evidence="8">
    <location>
        <begin position="1"/>
        <end position="21"/>
    </location>
</feature>
<feature type="chain" id="PRO_5035543963" description="Hexamerin 70b" evidence="8">
    <location>
        <begin position="22"/>
        <end position="683"/>
    </location>
</feature>
<feature type="domain" description="Hemocyanin N-terminal" evidence="1">
    <location>
        <begin position="32"/>
        <end position="153"/>
    </location>
</feature>
<feature type="domain" description="Hemocyanin middle" evidence="1">
    <location>
        <begin position="159"/>
        <end position="428"/>
    </location>
</feature>
<feature type="domain" description="Hemocyanin C-terminal" evidence="1">
    <location>
        <begin position="437"/>
        <end position="673"/>
    </location>
</feature>
<feature type="glycosylation site" description="N-linked (GlcNAc...) asparagine" evidence="2">
    <location>
        <position position="203"/>
    </location>
</feature>
<feature type="sequence conflict" description="In Ref. 7; AAD40236." evidence="10" ref="7">
    <original>Q</original>
    <variation>K</variation>
    <location>
        <position position="594"/>
    </location>
</feature>
<reference evidence="13" key="1">
    <citation type="journal article" date="2005" name="J. Insect Physiol.">
        <title>Molecular cloning and expression of a hexamerin cDNA from the honey bee, Apis mellifera.</title>
        <authorList>
            <person name="Cunha A.D."/>
            <person name="Nascimento A.M."/>
            <person name="Guidugli K.R."/>
            <person name="Simoes Z.L."/>
            <person name="Bitondi M.M."/>
        </authorList>
    </citation>
    <scope>NUCLEOTIDE SEQUENCE [MRNA]</scope>
    <scope>FUNCTION</scope>
    <scope>DEVELOPMENTAL STAGE</scope>
    <scope>INDUCTION BY JUVENILE HORMONE AND ECDYSTERONE</scope>
</reference>
<reference evidence="10" key="2">
    <citation type="journal article" date="2010" name="BMC Mol. Biol.">
        <title>The four hexamerin genes in the honey bee: structure, molecular evolution and function deduced from expression patterns in queens, workers and drones.</title>
        <authorList>
            <person name="Martins J.R."/>
            <person name="Nunes F.M."/>
            <person name="Cristino A.S."/>
            <person name="Simoes Z.L."/>
            <person name="Bitondi M.M."/>
        </authorList>
    </citation>
    <scope>NUCLEOTIDE SEQUENCE [MRNA]</scope>
    <scope>DEVELOPMENTAL STAGE</scope>
    <scope>INDUCTION BY JUVENILE HORMONE</scope>
</reference>
<reference evidence="14" key="3">
    <citation type="submission" date="2007-05" db="EMBL/GenBank/DDBJ databases">
        <title>Hexamerins in Apis mellifera.</title>
        <authorList>
            <person name="Wheeler D.E."/>
            <person name="Buck N.A."/>
        </authorList>
    </citation>
    <scope>NUCLEOTIDE SEQUENCE [MRNA]</scope>
</reference>
<reference evidence="17" key="4">
    <citation type="journal article" date="2006" name="Nature">
        <title>Insights into social insects from the genome of the honeybee Apis mellifera.</title>
        <authorList>
            <consortium name="Honeybee genome sequencing consortium"/>
        </authorList>
    </citation>
    <scope>NUCLEOTIDE SEQUENCE [LARGE SCALE GENOMIC DNA]</scope>
</reference>
<reference evidence="17" key="5">
    <citation type="journal article" date="2014" name="BMC Genomics">
        <title>Finding the missing honey bee genes: lessons learned from a genome upgrade.</title>
        <authorList>
            <consortium name="HGSC production teams"/>
            <consortium name="Honey Bee Genome Sequencing Consortium"/>
            <person name="Elsik C.G."/>
            <person name="Worley K.C."/>
            <person name="Bennett A.K."/>
            <person name="Beye M."/>
            <person name="Camara F."/>
            <person name="Childers C.P."/>
            <person name="de Graaf D.C."/>
            <person name="Debyser G."/>
            <person name="Deng J."/>
            <person name="Devreese B."/>
            <person name="Elhaik E."/>
            <person name="Evans J.D."/>
            <person name="Foster L.J."/>
            <person name="Graur D."/>
            <person name="Guigo R."/>
            <person name="Hoff K.J."/>
            <person name="Holder M.E."/>
            <person name="Hudson M.E."/>
            <person name="Hunt G.J."/>
            <person name="Jiang H."/>
            <person name="Joshi V."/>
            <person name="Khetani R.S."/>
            <person name="Kosarev P."/>
            <person name="Kovar C.L."/>
            <person name="Ma J."/>
            <person name="Maleszka R."/>
            <person name="Moritz R.F."/>
            <person name="Munoz-Torres M.C."/>
            <person name="Murphy T.D."/>
            <person name="Muzny D.M."/>
            <person name="Newsham I.F."/>
            <person name="Reese J.T."/>
            <person name="Robertson H.M."/>
            <person name="Robinson G.E."/>
            <person name="Rueppell O."/>
            <person name="Solovyev V."/>
            <person name="Stanke M."/>
            <person name="Stolle E."/>
            <person name="Tsuruda J.M."/>
            <person name="Vaerenbergh M.V."/>
            <person name="Waterhouse R.M."/>
            <person name="Weaver D.B."/>
            <person name="Whitfield C.W."/>
            <person name="Wu Y."/>
            <person name="Zdobnov E.M."/>
            <person name="Zhang L."/>
            <person name="Zhu D."/>
            <person name="Gibbs R.A."/>
        </authorList>
    </citation>
    <scope>NUCLEOTIDE SEQUENCE [LARGE SCALE GENOMIC DNA]</scope>
</reference>
<reference evidence="17" key="6">
    <citation type="journal article" date="1998" name="Insect Biochem. Mol. Biol.">
        <title>Identification and developmental profiles of hexamerins in antenna and hemolymph of the honeybee, Apis mellifera.</title>
        <authorList>
            <person name="Danty E."/>
            <person name="Arnold G."/>
            <person name="Burmester T."/>
            <person name="Huet J.C."/>
            <person name="Huet D."/>
            <person name="Pernollet J.C."/>
            <person name="Masson C."/>
        </authorList>
    </citation>
    <scope>PROTEIN SEQUENCE OF 22-36</scope>
    <scope>DEVELOPMENTAL STAGE</scope>
    <scope>PROTEOLYTIC CLEAVAGE</scope>
</reference>
<reference evidence="12" key="7">
    <citation type="journal article" date="1999" name="Proc. Natl. Acad. Sci. U.S.A.">
        <title>Differential gene expression between developing queens and workers in the honey bee, Apis mellifera.</title>
        <authorList>
            <person name="Evans J.D."/>
            <person name="Wheeler D.E."/>
        </authorList>
    </citation>
    <scope>NUCLEOTIDE SEQUENCE [MRNA] OF 375-600</scope>
    <scope>DEVELOPMENTAL STAGE</scope>
</reference>
<reference evidence="10" key="8">
    <citation type="journal article" date="2012" name="Insects">
        <title>Nuclear Immunolocalization of Hexamerins in the Fat Body of Metamorphosing Honey Bees.</title>
        <authorList>
            <person name="Martins J.R."/>
            <person name="Bitondi M.M."/>
        </authorList>
    </citation>
    <scope>FUNCTION</scope>
    <scope>SUBCELLULAR LOCATION</scope>
    <scope>TISSUE SPECIFICITY</scope>
    <scope>DEVELOPMENTAL STAGE</scope>
</reference>
<reference evidence="10" key="9">
    <citation type="journal article" date="2021" name="Insect Mol. Biol.">
        <title>miRNA-34 and miRNA-210 target hexamerin genes enhancing their differential expression during early brain development of honeybee (Apis mellifera) castes.</title>
        <authorList>
            <person name="Vieira J."/>
            <person name="Freitas F.C.P."/>
            <person name="Cristino A.S."/>
            <person name="Moda L.M.R."/>
            <person name="Martins J.R."/>
            <person name="Bitondi M.M.G."/>
            <person name="Simoes Z.L.P."/>
            <person name="Barchuk A.R."/>
        </authorList>
    </citation>
    <scope>DEVELOPMENTAL STAGE</scope>
    <scope>INDUCTION BY MIRNA-34 AND MIRNA-210</scope>
</reference>
<comment type="function">
    <text evidence="4 11">Storage protein that may function as a nutrient supply to compensate for lack of dietary proteins during metamorphosis and egg production.</text>
</comment>
<comment type="subunit">
    <text evidence="10">Probable homohexamer.</text>
</comment>
<comment type="subcellular location">
    <subcellularLocation>
        <location evidence="6">Secreted</location>
    </subcellularLocation>
    <subcellularLocation>
        <location evidence="6">Nucleus</location>
    </subcellularLocation>
    <subcellularLocation>
        <location evidence="6">Cytoplasm</location>
    </subcellularLocation>
    <subcellularLocation>
        <location evidence="6">Cytoplasmic granule</location>
    </subcellularLocation>
    <text evidence="6">Localizes in foci within the cytoplasm of some cells of the fat body; these are probably cytoplasmic granules formed by endocytosis of hexamerins.</text>
</comment>
<comment type="tissue specificity">
    <text evidence="6">Expressed in the fat body and secreted into the hemolymph (at protein level) (PubMed:26466725). Present in trophocytes and oenocytes of the fat body (at protein level) (PubMed:26466725).</text>
</comment>
<comment type="developmental stage">
    <text evidence="3 4 5 6 7 8">Expressed in the fat body of 5th instar larvae up to pupation (PubMed:20346164, PubMed:26466725). Present in the hemolymph from 5th larval instar until just before eclosion (at protein level); levels in the hemolymph may be regulated through resorption and sequestration in the fat body (PubMed:16055147, PubMed:26466725, PubMed:9692239). Appears to be sequestered in the fat body at time of pupation (at protein level) (PubMed:26466725). Differentially expressed in queens and workers during larval development (PubMed:10318926). Abundantly expressed in the gonads of larval queens and drones (PubMed:20346164). Expressed in the brains of 3rd and 4th instar larval queens and workers; expression in worker brains is significantly higher than in queen brains (PubMed:34309096). In workers expression in the brain decreases in 5th instar larvae while in queens it increases (PubMed:34309096).</text>
</comment>
<comment type="induction">
    <text evidence="4 5 7">In 5th instar larvae induced by juvenile hormone and ecdysterone (PubMed:16055147, PubMed:20346164). Post-transcriptionally repressed by miRNA-34 and miRNA-210 but not miRNA-317 (PubMed:34309096).</text>
</comment>
<comment type="miscellaneous">
    <text evidence="10">Hexamerins are evolutionarily related to hemocyanins but do not bind copper and have lost the ability to bind oxygen.</text>
</comment>
<comment type="similarity">
    <text evidence="10">Belongs to the hemocyanin/hexamerin family.</text>
</comment>
<evidence type="ECO:0000255" key="1"/>
<evidence type="ECO:0000255" key="2">
    <source>
        <dbReference type="PROSITE-ProRule" id="PRU00498"/>
    </source>
</evidence>
<evidence type="ECO:0000269" key="3">
    <source>
    </source>
</evidence>
<evidence type="ECO:0000269" key="4">
    <source>
    </source>
</evidence>
<evidence type="ECO:0000269" key="5">
    <source>
    </source>
</evidence>
<evidence type="ECO:0000269" key="6">
    <source>
    </source>
</evidence>
<evidence type="ECO:0000269" key="7">
    <source>
    </source>
</evidence>
<evidence type="ECO:0000269" key="8">
    <source>
    </source>
</evidence>
<evidence type="ECO:0000303" key="9">
    <source>
    </source>
</evidence>
<evidence type="ECO:0000305" key="10"/>
<evidence type="ECO:0000305" key="11">
    <source>
    </source>
</evidence>
<evidence type="ECO:0000312" key="12">
    <source>
        <dbReference type="EMBL" id="AAD40236.1"/>
    </source>
</evidence>
<evidence type="ECO:0000312" key="13">
    <source>
        <dbReference type="EMBL" id="AAT11850.1"/>
    </source>
</evidence>
<evidence type="ECO:0000312" key="14">
    <source>
        <dbReference type="EMBL" id="ABR45903.1"/>
    </source>
</evidence>
<evidence type="ECO:0000312" key="15">
    <source>
        <dbReference type="EnsemblMetazoa" id="NP_001011600"/>
    </source>
</evidence>
<evidence type="ECO:0000312" key="16">
    <source>
        <dbReference type="Proteomes" id="UP000005203"/>
    </source>
</evidence>
<evidence type="ECO:0000312" key="17">
    <source>
        <dbReference type="RefSeq" id="NP_001011600.1"/>
    </source>
</evidence>